<proteinExistence type="evidence at protein level"/>
<comment type="function">
    <text>Oxidizes only the C-6 hydroxy group of morphine and codeine.</text>
</comment>
<comment type="catalytic activity">
    <reaction>
        <text>morphine + NAD(+) = morphinone + NADH + H(+)</text>
        <dbReference type="Rhea" id="RHEA:14317"/>
        <dbReference type="ChEBI" id="CHEBI:15378"/>
        <dbReference type="ChEBI" id="CHEBI:57540"/>
        <dbReference type="ChEBI" id="CHEBI:57728"/>
        <dbReference type="ChEBI" id="CHEBI:57945"/>
        <dbReference type="ChEBI" id="CHEBI:58097"/>
        <dbReference type="EC" id="1.1.1.218"/>
    </reaction>
</comment>
<comment type="catalytic activity">
    <reaction>
        <text>morphine + NADP(+) = morphinone + NADPH + H(+)</text>
        <dbReference type="Rhea" id="RHEA:14321"/>
        <dbReference type="ChEBI" id="CHEBI:15378"/>
        <dbReference type="ChEBI" id="CHEBI:57728"/>
        <dbReference type="ChEBI" id="CHEBI:57783"/>
        <dbReference type="ChEBI" id="CHEBI:58097"/>
        <dbReference type="ChEBI" id="CHEBI:58349"/>
        <dbReference type="EC" id="1.1.1.218"/>
    </reaction>
</comment>
<comment type="pathway">
    <text>Alkaloid degradation; codeine degradation.</text>
</comment>
<comment type="pathway">
    <text>Alkaloid degradation; morphine degradation.</text>
</comment>
<comment type="subunit">
    <text>Monomer.</text>
</comment>
<comment type="similarity">
    <text evidence="5">Belongs to the aldo/keto reductase family.</text>
</comment>
<sequence>MAGKSPLINLNNGVKMPALGLGVFAASAEETASAIASAISSGYRLIDTARSYNNEAQVGEGIRNSGVDRAEMFVTTKLFNCDYGYERALRAFDESLGRLGLDYVDLYLLHWPTKDWNATIQSWKAAEKILGDGRARAIGVCNFLEDQLDELIAASDVVPAVNQIELHPYFAQKPLLAKNRALGIVTEAWSPIGGAINDGDGDNHGGRKHPLTDPVITTIAEAHGRSAAQVILRWHFQNDVVAIPKSVNPERIAKNIDVFDFALSDAEMAQLDELDTGVRIGPDPRDVDTSSFAEFV</sequence>
<organism>
    <name type="scientific">Pseudomonas putida</name>
    <name type="common">Arthrobacter siderocapsulatus</name>
    <dbReference type="NCBI Taxonomy" id="303"/>
    <lineage>
        <taxon>Bacteria</taxon>
        <taxon>Pseudomonadati</taxon>
        <taxon>Pseudomonadota</taxon>
        <taxon>Gammaproteobacteria</taxon>
        <taxon>Pseudomonadales</taxon>
        <taxon>Pseudomonadaceae</taxon>
        <taxon>Pseudomonas</taxon>
    </lineage>
</organism>
<name>MORA_PSEPU</name>
<gene>
    <name type="primary">morA</name>
</gene>
<reference key="1">
    <citation type="journal article" date="1993" name="Biochem. J.">
        <title>Nucleotide sequence and over-expression of morphine dehydrogenase, a plasmid-encoded gene from Pseudomonas putida M10.</title>
        <authorList>
            <person name="Willey D.L."/>
            <person name="Caswell D.A."/>
            <person name="Lowe C.R."/>
            <person name="Bruce N.C."/>
        </authorList>
    </citation>
    <scope>NUCLEOTIDE SEQUENCE [GENOMIC DNA]</scope>
    <scope>PROTEIN SEQUENCE OF 2-26</scope>
    <source>
        <strain>M10</strain>
    </source>
</reference>
<reference key="2">
    <citation type="submission" date="1996-10" db="EMBL/GenBank/DDBJ databases">
        <authorList>
            <person name="Bruce N.C."/>
        </authorList>
    </citation>
    <scope>SEQUENCE REVISION</scope>
</reference>
<reference key="3">
    <citation type="journal article" date="1991" name="Biochem. J.">
        <title>Microbial degradation of the morphine alkaloids. Purification and characterization of morphine dehydrogenase from Pseudomonas putida M10.</title>
        <authorList>
            <person name="Bruce N.C."/>
            <person name="Wilmot C.J."/>
            <person name="Jordan K.N."/>
            <person name="Stephens L.D.G."/>
            <person name="Lowe C.R."/>
        </authorList>
    </citation>
    <scope>PROTEIN SEQUENCE OF 2-26</scope>
    <scope>CHARACTERIZATION</scope>
    <source>
        <strain>M10</strain>
    </source>
</reference>
<reference key="4">
    <citation type="journal article" date="1994" name="Biochem. J.">
        <title>Bacterial morphine dehydrogenase further defines a distinct superfamily of oxidoreductases with diverse functional activities.</title>
        <authorList>
            <person name="Bruce N.C."/>
            <person name="Willey D.L."/>
            <person name="Coulson A.F.W."/>
            <person name="Jeffery J."/>
        </authorList>
    </citation>
    <scope>SIMILARITY</scope>
</reference>
<accession>Q02198</accession>
<keyword id="KW-0017">Alkaloid metabolism</keyword>
<keyword id="KW-0903">Direct protein sequencing</keyword>
<keyword id="KW-0521">NADP</keyword>
<keyword id="KW-0560">Oxidoreductase</keyword>
<keyword id="KW-0614">Plasmid</keyword>
<dbReference type="EC" id="1.1.1.218"/>
<dbReference type="EMBL" id="M94775">
    <property type="protein sequence ID" value="AAB17356.1"/>
    <property type="molecule type" value="Genomic_DNA"/>
</dbReference>
<dbReference type="SMR" id="Q02198"/>
<dbReference type="KEGG" id="ag:AAB17356"/>
<dbReference type="UniPathway" id="UPA00317"/>
<dbReference type="UniPathway" id="UPA00318"/>
<dbReference type="GO" id="GO:0004033">
    <property type="term" value="F:aldo-keto reductase (NADPH) activity"/>
    <property type="evidence" value="ECO:0007669"/>
    <property type="project" value="TreeGrafter"/>
</dbReference>
<dbReference type="GO" id="GO:0050109">
    <property type="term" value="F:morphine 6-dehydrogenase activity"/>
    <property type="evidence" value="ECO:0007669"/>
    <property type="project" value="UniProtKB-EC"/>
</dbReference>
<dbReference type="GO" id="GO:2001292">
    <property type="term" value="P:codeine catabolic process"/>
    <property type="evidence" value="ECO:0007669"/>
    <property type="project" value="UniProtKB-UniPathway"/>
</dbReference>
<dbReference type="GO" id="GO:0071273">
    <property type="term" value="P:morphine catabolic process"/>
    <property type="evidence" value="ECO:0007669"/>
    <property type="project" value="UniProtKB-UniPathway"/>
</dbReference>
<dbReference type="FunFam" id="3.20.20.100:FF:000015">
    <property type="entry name" value="Oxidoreductase, aldo/keto reductase family"/>
    <property type="match status" value="1"/>
</dbReference>
<dbReference type="Gene3D" id="3.20.20.100">
    <property type="entry name" value="NADP-dependent oxidoreductase domain"/>
    <property type="match status" value="1"/>
</dbReference>
<dbReference type="InterPro" id="IPR020471">
    <property type="entry name" value="AKR"/>
</dbReference>
<dbReference type="InterPro" id="IPR018170">
    <property type="entry name" value="Aldo/ket_reductase_CS"/>
</dbReference>
<dbReference type="InterPro" id="IPR023210">
    <property type="entry name" value="NADP_OxRdtase_dom"/>
</dbReference>
<dbReference type="InterPro" id="IPR036812">
    <property type="entry name" value="NADP_OxRdtase_dom_sf"/>
</dbReference>
<dbReference type="PANTHER" id="PTHR43827">
    <property type="entry name" value="2,5-DIKETO-D-GLUCONIC ACID REDUCTASE"/>
    <property type="match status" value="1"/>
</dbReference>
<dbReference type="PANTHER" id="PTHR43827:SF3">
    <property type="entry name" value="NADP-DEPENDENT OXIDOREDUCTASE DOMAIN-CONTAINING PROTEIN"/>
    <property type="match status" value="1"/>
</dbReference>
<dbReference type="Pfam" id="PF00248">
    <property type="entry name" value="Aldo_ket_red"/>
    <property type="match status" value="1"/>
</dbReference>
<dbReference type="PIRSF" id="PIRSF000097">
    <property type="entry name" value="AKR"/>
    <property type="match status" value="1"/>
</dbReference>
<dbReference type="PRINTS" id="PR00069">
    <property type="entry name" value="ALDKETRDTASE"/>
</dbReference>
<dbReference type="SUPFAM" id="SSF51430">
    <property type="entry name" value="NAD(P)-linked oxidoreductase"/>
    <property type="match status" value="1"/>
</dbReference>
<dbReference type="PROSITE" id="PS00798">
    <property type="entry name" value="ALDOKETO_REDUCTASE_1"/>
    <property type="match status" value="1"/>
</dbReference>
<dbReference type="PROSITE" id="PS00063">
    <property type="entry name" value="ALDOKETO_REDUCTASE_3"/>
    <property type="match status" value="1"/>
</dbReference>
<geneLocation type="plasmid">
    <name>pMDH7.2</name>
</geneLocation>
<feature type="initiator methionine" description="Removed" evidence="3 4">
    <location>
        <position position="1"/>
    </location>
</feature>
<feature type="chain" id="PRO_0000124675" description="Morphine 6-dehydrogenase">
    <location>
        <begin position="2"/>
        <end position="296"/>
    </location>
</feature>
<feature type="active site" description="Proton donor" evidence="1">
    <location>
        <position position="52"/>
    </location>
</feature>
<feature type="binding site" evidence="2">
    <location>
        <begin position="13"/>
        <end position="22"/>
    </location>
    <ligand>
        <name>NADP(+)</name>
        <dbReference type="ChEBI" id="CHEBI:58349"/>
    </ligand>
</feature>
<feature type="binding site" evidence="1">
    <location>
        <position position="110"/>
    </location>
    <ligand>
        <name>substrate</name>
    </ligand>
</feature>
<evidence type="ECO:0000250" key="1"/>
<evidence type="ECO:0000255" key="2"/>
<evidence type="ECO:0000269" key="3">
    <source>
    </source>
</evidence>
<evidence type="ECO:0000269" key="4">
    <source>
    </source>
</evidence>
<evidence type="ECO:0000305" key="5"/>
<protein>
    <recommendedName>
        <fullName>Morphine 6-dehydrogenase</fullName>
        <ecNumber>1.1.1.218</ecNumber>
    </recommendedName>
    <alternativeName>
        <fullName>Naloxone reductase</fullName>
    </alternativeName>
</protein>